<feature type="chain" id="PRO_0000456660" description="Anti-CBASS protein Acb1">
    <location>
        <begin position="1"/>
        <end position="153"/>
    </location>
</feature>
<feature type="active site" evidence="1">
    <location>
        <position position="44"/>
    </location>
</feature>
<feature type="active site" evidence="1">
    <location>
        <position position="46"/>
    </location>
</feature>
<feature type="active site" evidence="1">
    <location>
        <position position="113"/>
    </location>
</feature>
<feature type="active site" evidence="1">
    <location>
        <position position="115"/>
    </location>
</feature>
<feature type="binding site" evidence="1">
    <location>
        <position position="12"/>
    </location>
    <ligand>
        <name>3',3'-cGAMP</name>
        <dbReference type="ChEBI" id="CHEBI:71501"/>
    </ligand>
</feature>
<feature type="binding site" evidence="1">
    <location>
        <position position="12"/>
    </location>
    <ligand>
        <name>3',3'-cUAMP</name>
        <dbReference type="ChEBI" id="CHEBI:143809"/>
    </ligand>
</feature>
<feature type="binding site" description="specific to adenosine" evidence="1">
    <location>
        <position position="142"/>
    </location>
    <ligand>
        <name>3',3'-cGAMP</name>
        <dbReference type="ChEBI" id="CHEBI:71501"/>
    </ligand>
</feature>
<feature type="binding site" description="specific to adenosine" evidence="1">
    <location>
        <position position="142"/>
    </location>
    <ligand>
        <name>3',3'-cUAMP</name>
        <dbReference type="ChEBI" id="CHEBI:143809"/>
    </ligand>
</feature>
<feature type="binding site" evidence="1">
    <location>
        <position position="148"/>
    </location>
    <ligand>
        <name>3',3'-cGAMP</name>
        <dbReference type="ChEBI" id="CHEBI:71501"/>
    </ligand>
</feature>
<feature type="binding site" evidence="1">
    <location>
        <position position="148"/>
    </location>
    <ligand>
        <name>3',3'-cUAMP</name>
        <dbReference type="ChEBI" id="CHEBI:143809"/>
    </ligand>
</feature>
<reference key="1">
    <citation type="submission" date="2012-06" db="EMBL/GenBank/DDBJ databases">
        <title>Genomic characterization of five bacteriophages specific for Yersinia species.</title>
        <authorList>
            <person name="Skurnik M."/>
            <person name="Nawaz A."/>
            <person name="Happonen L."/>
            <person name="Butcher S."/>
            <person name="Mattinen L."/>
        </authorList>
    </citation>
    <scope>NUCLEOTIDE SEQUENCE [LARGE SCALE GENOMIC DNA]</scope>
</reference>
<reference key="2">
    <citation type="journal article" date="2022" name="Nature">
        <title>Phage anti-CBASS and anti-Pycsar nucleases subvert bacterial immunity.</title>
        <authorList>
            <person name="Hobbs S.J."/>
            <person name="Wein T."/>
            <person name="Lu A."/>
            <person name="Morehouse B.R."/>
            <person name="Schnabel J."/>
            <person name="Leavitt A."/>
            <person name="Yirmiya E."/>
            <person name="Sorek R."/>
            <person name="Kranzusch P.J."/>
        </authorList>
    </citation>
    <scope>FUNCTION</scope>
    <scope>CATALYTIC ACTIVITY</scope>
</reference>
<keyword id="KW-0945">Host-virus interaction</keyword>
<keyword id="KW-0378">Hydrolase</keyword>
<keyword id="KW-1090">Inhibition of host innate immune response by virus</keyword>
<keyword id="KW-1185">Reference proteome</keyword>
<keyword id="KW-0899">Viral immunoevasion</keyword>
<comment type="function">
    <text evidence="2 3">Counteracts the host CBASS antiviral defense system. Phosphodiesterase that enables metal-independent hydrolysis of the host cyclic di- and trinucleotide CBASS signals such as 3'3'-cGAMP, 3'3'cUA, and 3'3'3'-cAAA (PubMed:35395152). Does not cleave cGG or cA4 (By similarity). Besides evasion of the CBASS system, might also enable evasion of the type III CRISPR systems that use cA3 signals (By similarity).</text>
</comment>
<comment type="catalytic activity">
    <reaction evidence="3">
        <text>3',3'-cUAMP + H2O = U[3'-5']pAp[3'] + H(+)</text>
        <dbReference type="Rhea" id="RHEA:72835"/>
        <dbReference type="ChEBI" id="CHEBI:15377"/>
        <dbReference type="ChEBI" id="CHEBI:15378"/>
        <dbReference type="ChEBI" id="CHEBI:143809"/>
        <dbReference type="ChEBI" id="CHEBI:192498"/>
    </reaction>
    <physiologicalReaction direction="left-to-right" evidence="3">
        <dbReference type="Rhea" id="RHEA:72836"/>
    </physiologicalReaction>
</comment>
<comment type="catalytic activity">
    <reaction evidence="3">
        <text>3',3',3'-c-tri-AMP + H2O = A[3'-5']pA[3'-5']pAp[3'] + H(+)</text>
        <dbReference type="Rhea" id="RHEA:72859"/>
        <dbReference type="ChEBI" id="CHEBI:15377"/>
        <dbReference type="ChEBI" id="CHEBI:15378"/>
        <dbReference type="ChEBI" id="CHEBI:192523"/>
        <dbReference type="ChEBI" id="CHEBI:192530"/>
    </reaction>
    <physiologicalReaction direction="left-to-right" evidence="3">
        <dbReference type="Rhea" id="RHEA:72860"/>
    </physiologicalReaction>
</comment>
<comment type="catalytic activity">
    <reaction evidence="3">
        <text>3',3',3'-cAAG + H2O = G[3'-5']pA[3'-5']pAp[3'] + H(+)</text>
        <dbReference type="Rhea" id="RHEA:72863"/>
        <dbReference type="ChEBI" id="CHEBI:15377"/>
        <dbReference type="ChEBI" id="CHEBI:15378"/>
        <dbReference type="ChEBI" id="CHEBI:143810"/>
        <dbReference type="ChEBI" id="CHEBI:192532"/>
    </reaction>
    <physiologicalReaction direction="left-to-right" evidence="3">
        <dbReference type="Rhea" id="RHEA:72864"/>
    </physiologicalReaction>
</comment>
<comment type="catalytic activity">
    <reaction evidence="3">
        <text>3',3',3'-cAAG + H2O = A[3'-5']pG[3'-5']pAp[3'] + H(+)</text>
        <dbReference type="Rhea" id="RHEA:72867"/>
        <dbReference type="ChEBI" id="CHEBI:15377"/>
        <dbReference type="ChEBI" id="CHEBI:15378"/>
        <dbReference type="ChEBI" id="CHEBI:143810"/>
        <dbReference type="ChEBI" id="CHEBI:192533"/>
    </reaction>
    <physiologicalReaction direction="left-to-right" evidence="3">
        <dbReference type="Rhea" id="RHEA:72868"/>
    </physiologicalReaction>
</comment>
<comment type="catalytic activity">
    <reaction evidence="3">
        <text>3',3'-cGAMP + H2O = G[3'-5']pAp[3'] + H(+)</text>
        <dbReference type="Rhea" id="RHEA:72831"/>
        <dbReference type="ChEBI" id="CHEBI:15377"/>
        <dbReference type="ChEBI" id="CHEBI:15378"/>
        <dbReference type="ChEBI" id="CHEBI:71501"/>
        <dbReference type="ChEBI" id="CHEBI:192497"/>
    </reaction>
    <physiologicalReaction direction="left-to-right" evidence="3">
        <dbReference type="Rhea" id="RHEA:72832"/>
    </physiologicalReaction>
</comment>
<comment type="similarity">
    <text evidence="5">Belongs to the anti-CBASS protein Acb1 family.</text>
</comment>
<dbReference type="EMBL" id="HE956709">
    <property type="protein sequence ID" value="CCI88716.1"/>
    <property type="molecule type" value="Genomic_DNA"/>
</dbReference>
<dbReference type="RefSeq" id="YP_007235975.1">
    <property type="nucleotide sequence ID" value="NC_019909.1"/>
</dbReference>
<dbReference type="SMR" id="I7K316"/>
<dbReference type="GeneID" id="14295626"/>
<dbReference type="KEGG" id="vg:14295626"/>
<dbReference type="OrthoDB" id="11210at10239"/>
<dbReference type="Proteomes" id="UP000002909">
    <property type="component" value="Genome"/>
</dbReference>
<dbReference type="GO" id="GO:0016787">
    <property type="term" value="F:hydrolase activity"/>
    <property type="evidence" value="ECO:0007669"/>
    <property type="project" value="UniProtKB-KW"/>
</dbReference>
<dbReference type="GO" id="GO:0052170">
    <property type="term" value="P:symbiont-mediated suppression of host innate immune response"/>
    <property type="evidence" value="ECO:0007669"/>
    <property type="project" value="UniProtKB-KW"/>
</dbReference>
<dbReference type="InterPro" id="IPR056175">
    <property type="entry name" value="Acb1-like_C"/>
</dbReference>
<dbReference type="InterPro" id="IPR009097">
    <property type="entry name" value="Cyclic_Pdiesterase"/>
</dbReference>
<dbReference type="Pfam" id="PF23474">
    <property type="entry name" value="Acb1"/>
    <property type="match status" value="1"/>
</dbReference>
<dbReference type="SUPFAM" id="SSF55144">
    <property type="entry name" value="LigT-like"/>
    <property type="match status" value="1"/>
</dbReference>
<gene>
    <name evidence="6" type="primary">g142</name>
    <name evidence="6" type="ORF">BN80_146</name>
</gene>
<accession>I7K316</accession>
<evidence type="ECO:0000250" key="1">
    <source>
        <dbReference type="UniProtKB" id="A0A868BQY3"/>
    </source>
</evidence>
<evidence type="ECO:0000250" key="2">
    <source>
        <dbReference type="UniProtKB" id="P04533"/>
    </source>
</evidence>
<evidence type="ECO:0000269" key="3">
    <source>
    </source>
</evidence>
<evidence type="ECO:0000303" key="4">
    <source>
    </source>
</evidence>
<evidence type="ECO:0000305" key="5"/>
<evidence type="ECO:0000312" key="6">
    <source>
        <dbReference type="EMBL" id="CCI88716.1"/>
    </source>
</evidence>
<organismHost>
    <name type="scientific">Yersinia enterocolitica</name>
    <dbReference type="NCBI Taxonomy" id="630"/>
</organismHost>
<name>ACB1_BPPR1</name>
<proteinExistence type="evidence at protein level"/>
<sequence length="153" mass="17518">MLTFDEAAEGLYVAAKYSELTLDAIEMLQRELKVPNPVPREKIHSTICYSRVMVPYSVASGSFEVATSGHLEVWNHGSSPLLVLVLDSDYLRCRHQYARAIGATHDFQDYTPHITLSYNVGVLKYPKEKYPIRVVLDREYKEPLKLDWADDLK</sequence>
<organism>
    <name type="scientific">Yersinia phage phiR1-RT</name>
    <dbReference type="NCBI Taxonomy" id="1206558"/>
    <lineage>
        <taxon>Viruses</taxon>
        <taxon>Duplodnaviria</taxon>
        <taxon>Heunggongvirae</taxon>
        <taxon>Uroviricota</taxon>
        <taxon>Caudoviricetes</taxon>
        <taxon>Straboviridae</taxon>
        <taxon>Tevenvirinae</taxon>
        <taxon>Tegunavirus</taxon>
        <taxon>Tegunavirus r1rt</taxon>
    </lineage>
</organism>
<protein>
    <recommendedName>
        <fullName evidence="4">Anti-CBASS protein Acb1</fullName>
        <shortName evidence="4">Acb1</shortName>
    </recommendedName>
    <alternativeName>
        <fullName>Gene product 142</fullName>
        <shortName>gp142</shortName>
    </alternativeName>
</protein>